<accession>Q5NFK3</accession>
<gene>
    <name evidence="1" type="primary">tilS</name>
    <name type="ordered locus">FTT_1231</name>
</gene>
<feature type="chain" id="PRO_0000181694" description="tRNA(Ile)-lysidine synthase">
    <location>
        <begin position="1"/>
        <end position="398"/>
    </location>
</feature>
<feature type="binding site" evidence="1">
    <location>
        <begin position="25"/>
        <end position="30"/>
    </location>
    <ligand>
        <name>ATP</name>
        <dbReference type="ChEBI" id="CHEBI:30616"/>
    </ligand>
</feature>
<sequence>MSISKSLVLNEIKKFSPSHIIIGYSGGVDSSVLLNISKELDIPLIAIYINHNLHRDSLKWQIHCQQTCQKYNLQFISHSLDKVPKGESFEAWASKQRMAFFQKIMQQYSKPLLLLGHHQDDQAETFLIQAIRGSGLAGLAGIPHYKELHHGGVLRPLLKYSKIEIEGFAKLNNISYIYDDSNEDIKYRRNLIRNQIIPILQQVNPNISQTLSRSANICAESNNILQKLLTERLQSISQDTNLIISELIKLDDDIQKNLLHLWFKQNTQQSLKSKQIKELHLAVNNPSTGWQIDISNYYQIHIQYNQLIIKYPTTINDISKEDIISWLSKNLNEEIDLTKIVIRDRKPDDKCKYRGRNKPNKLKILFQELQIPTTERSKAKIILKDQQIIAVYPFFICG</sequence>
<comment type="function">
    <text evidence="1">Ligates lysine onto the cytidine present at position 34 of the AUA codon-specific tRNA(Ile) that contains the anticodon CAU, in an ATP-dependent manner. Cytidine is converted to lysidine, thus changing the amino acid specificity of the tRNA from methionine to isoleucine.</text>
</comment>
<comment type="catalytic activity">
    <reaction evidence="1">
        <text>cytidine(34) in tRNA(Ile2) + L-lysine + ATP = lysidine(34) in tRNA(Ile2) + AMP + diphosphate + H(+)</text>
        <dbReference type="Rhea" id="RHEA:43744"/>
        <dbReference type="Rhea" id="RHEA-COMP:10625"/>
        <dbReference type="Rhea" id="RHEA-COMP:10670"/>
        <dbReference type="ChEBI" id="CHEBI:15378"/>
        <dbReference type="ChEBI" id="CHEBI:30616"/>
        <dbReference type="ChEBI" id="CHEBI:32551"/>
        <dbReference type="ChEBI" id="CHEBI:33019"/>
        <dbReference type="ChEBI" id="CHEBI:82748"/>
        <dbReference type="ChEBI" id="CHEBI:83665"/>
        <dbReference type="ChEBI" id="CHEBI:456215"/>
        <dbReference type="EC" id="6.3.4.19"/>
    </reaction>
</comment>
<comment type="subcellular location">
    <subcellularLocation>
        <location evidence="1">Cytoplasm</location>
    </subcellularLocation>
</comment>
<comment type="domain">
    <text>The N-terminal region contains the highly conserved SGGXDS motif, predicted to be a P-loop motif involved in ATP binding.</text>
</comment>
<comment type="similarity">
    <text evidence="1">Belongs to the tRNA(Ile)-lysidine synthase family.</text>
</comment>
<name>TILS_FRATT</name>
<reference key="1">
    <citation type="journal article" date="2005" name="Nat. Genet.">
        <title>The complete genome sequence of Francisella tularensis, the causative agent of tularemia.</title>
        <authorList>
            <person name="Larsson P."/>
            <person name="Oyston P.C.F."/>
            <person name="Chain P."/>
            <person name="Chu M.C."/>
            <person name="Duffield M."/>
            <person name="Fuxelius H.-H."/>
            <person name="Garcia E."/>
            <person name="Haelltorp G."/>
            <person name="Johansson D."/>
            <person name="Isherwood K.E."/>
            <person name="Karp P.D."/>
            <person name="Larsson E."/>
            <person name="Liu Y."/>
            <person name="Michell S."/>
            <person name="Prior J."/>
            <person name="Prior R."/>
            <person name="Malfatti S."/>
            <person name="Sjoestedt A."/>
            <person name="Svensson K."/>
            <person name="Thompson N."/>
            <person name="Vergez L."/>
            <person name="Wagg J.K."/>
            <person name="Wren B.W."/>
            <person name="Lindler L.E."/>
            <person name="Andersson S.G.E."/>
            <person name="Forsman M."/>
            <person name="Titball R.W."/>
        </authorList>
    </citation>
    <scope>NUCLEOTIDE SEQUENCE [LARGE SCALE GENOMIC DNA]</scope>
    <source>
        <strain>SCHU S4 / Schu 4</strain>
    </source>
</reference>
<evidence type="ECO:0000255" key="1">
    <source>
        <dbReference type="HAMAP-Rule" id="MF_01161"/>
    </source>
</evidence>
<dbReference type="EC" id="6.3.4.19" evidence="1"/>
<dbReference type="EMBL" id="AJ749949">
    <property type="protein sequence ID" value="CAG45864.1"/>
    <property type="molecule type" value="Genomic_DNA"/>
</dbReference>
<dbReference type="RefSeq" id="WP_003018488.1">
    <property type="nucleotide sequence ID" value="NZ_CP010290.1"/>
</dbReference>
<dbReference type="RefSeq" id="YP_170189.1">
    <property type="nucleotide sequence ID" value="NC_006570.2"/>
</dbReference>
<dbReference type="SMR" id="Q5NFK3"/>
<dbReference type="STRING" id="177416.FTT_1231"/>
<dbReference type="DNASU" id="3191862"/>
<dbReference type="EnsemblBacteria" id="CAG45864">
    <property type="protein sequence ID" value="CAG45864"/>
    <property type="gene ID" value="FTT_1231"/>
</dbReference>
<dbReference type="KEGG" id="ftu:FTT_1231"/>
<dbReference type="eggNOG" id="COG0037">
    <property type="taxonomic scope" value="Bacteria"/>
</dbReference>
<dbReference type="OrthoDB" id="9807403at2"/>
<dbReference type="Proteomes" id="UP000001174">
    <property type="component" value="Chromosome"/>
</dbReference>
<dbReference type="GO" id="GO:0005737">
    <property type="term" value="C:cytoplasm"/>
    <property type="evidence" value="ECO:0007669"/>
    <property type="project" value="UniProtKB-SubCell"/>
</dbReference>
<dbReference type="GO" id="GO:0005524">
    <property type="term" value="F:ATP binding"/>
    <property type="evidence" value="ECO:0007669"/>
    <property type="project" value="UniProtKB-UniRule"/>
</dbReference>
<dbReference type="GO" id="GO:0032267">
    <property type="term" value="F:tRNA(Ile)-lysidine synthase activity"/>
    <property type="evidence" value="ECO:0007669"/>
    <property type="project" value="UniProtKB-EC"/>
</dbReference>
<dbReference type="GO" id="GO:0006400">
    <property type="term" value="P:tRNA modification"/>
    <property type="evidence" value="ECO:0007669"/>
    <property type="project" value="UniProtKB-UniRule"/>
</dbReference>
<dbReference type="CDD" id="cd01992">
    <property type="entry name" value="TilS_N"/>
    <property type="match status" value="1"/>
</dbReference>
<dbReference type="Gene3D" id="3.40.50.620">
    <property type="entry name" value="HUPs"/>
    <property type="match status" value="1"/>
</dbReference>
<dbReference type="HAMAP" id="MF_01161">
    <property type="entry name" value="tRNA_Ile_lys_synt"/>
    <property type="match status" value="1"/>
</dbReference>
<dbReference type="InterPro" id="IPR012796">
    <property type="entry name" value="Lysidine-tRNA-synth_C"/>
</dbReference>
<dbReference type="InterPro" id="IPR014729">
    <property type="entry name" value="Rossmann-like_a/b/a_fold"/>
</dbReference>
<dbReference type="InterPro" id="IPR011063">
    <property type="entry name" value="TilS/TtcA_N"/>
</dbReference>
<dbReference type="InterPro" id="IPR012094">
    <property type="entry name" value="tRNA_Ile_lys_synt"/>
</dbReference>
<dbReference type="InterPro" id="IPR012795">
    <property type="entry name" value="tRNA_Ile_lys_synt_N"/>
</dbReference>
<dbReference type="InterPro" id="IPR015262">
    <property type="entry name" value="tRNA_Ile_lys_synt_subst-bd"/>
</dbReference>
<dbReference type="NCBIfam" id="TIGR02433">
    <property type="entry name" value="lysidine_TilS_C"/>
    <property type="match status" value="1"/>
</dbReference>
<dbReference type="NCBIfam" id="TIGR02432">
    <property type="entry name" value="lysidine_TilS_N"/>
    <property type="match status" value="1"/>
</dbReference>
<dbReference type="PANTHER" id="PTHR43033">
    <property type="entry name" value="TRNA(ILE)-LYSIDINE SYNTHASE-RELATED"/>
    <property type="match status" value="1"/>
</dbReference>
<dbReference type="PANTHER" id="PTHR43033:SF1">
    <property type="entry name" value="TRNA(ILE)-LYSIDINE SYNTHASE-RELATED"/>
    <property type="match status" value="1"/>
</dbReference>
<dbReference type="Pfam" id="PF01171">
    <property type="entry name" value="ATP_bind_3"/>
    <property type="match status" value="1"/>
</dbReference>
<dbReference type="Pfam" id="PF09179">
    <property type="entry name" value="TilS"/>
    <property type="match status" value="1"/>
</dbReference>
<dbReference type="Pfam" id="PF11734">
    <property type="entry name" value="TilS_C"/>
    <property type="match status" value="1"/>
</dbReference>
<dbReference type="SMART" id="SM00977">
    <property type="entry name" value="TilS_C"/>
    <property type="match status" value="1"/>
</dbReference>
<dbReference type="SUPFAM" id="SSF52402">
    <property type="entry name" value="Adenine nucleotide alpha hydrolases-like"/>
    <property type="match status" value="1"/>
</dbReference>
<dbReference type="SUPFAM" id="SSF82829">
    <property type="entry name" value="MesJ substrate recognition domain-like"/>
    <property type="match status" value="1"/>
</dbReference>
<dbReference type="SUPFAM" id="SSF56037">
    <property type="entry name" value="PheT/TilS domain"/>
    <property type="match status" value="1"/>
</dbReference>
<proteinExistence type="inferred from homology"/>
<keyword id="KW-0067">ATP-binding</keyword>
<keyword id="KW-0963">Cytoplasm</keyword>
<keyword id="KW-0436">Ligase</keyword>
<keyword id="KW-0547">Nucleotide-binding</keyword>
<keyword id="KW-1185">Reference proteome</keyword>
<keyword id="KW-0819">tRNA processing</keyword>
<organism>
    <name type="scientific">Francisella tularensis subsp. tularensis (strain SCHU S4 / Schu 4)</name>
    <dbReference type="NCBI Taxonomy" id="177416"/>
    <lineage>
        <taxon>Bacteria</taxon>
        <taxon>Pseudomonadati</taxon>
        <taxon>Pseudomonadota</taxon>
        <taxon>Gammaproteobacteria</taxon>
        <taxon>Thiotrichales</taxon>
        <taxon>Francisellaceae</taxon>
        <taxon>Francisella</taxon>
    </lineage>
</organism>
<protein>
    <recommendedName>
        <fullName evidence="1">tRNA(Ile)-lysidine synthase</fullName>
        <ecNumber evidence="1">6.3.4.19</ecNumber>
    </recommendedName>
    <alternativeName>
        <fullName evidence="1">tRNA(Ile)-2-lysyl-cytidine synthase</fullName>
    </alternativeName>
    <alternativeName>
        <fullName evidence="1">tRNA(Ile)-lysidine synthetase</fullName>
    </alternativeName>
</protein>